<accession>Q894G7</accession>
<evidence type="ECO:0000255" key="1">
    <source>
        <dbReference type="HAMAP-Rule" id="MF_00378"/>
    </source>
</evidence>
<feature type="chain" id="PRO_0000197841" description="Exodeoxyribonuclease 7 large subunit">
    <location>
        <begin position="1"/>
        <end position="396"/>
    </location>
</feature>
<organism>
    <name type="scientific">Clostridium tetani (strain Massachusetts / E88)</name>
    <dbReference type="NCBI Taxonomy" id="212717"/>
    <lineage>
        <taxon>Bacteria</taxon>
        <taxon>Bacillati</taxon>
        <taxon>Bacillota</taxon>
        <taxon>Clostridia</taxon>
        <taxon>Eubacteriales</taxon>
        <taxon>Clostridiaceae</taxon>
        <taxon>Clostridium</taxon>
    </lineage>
</organism>
<keyword id="KW-0963">Cytoplasm</keyword>
<keyword id="KW-0269">Exonuclease</keyword>
<keyword id="KW-0378">Hydrolase</keyword>
<keyword id="KW-0540">Nuclease</keyword>
<keyword id="KW-1185">Reference proteome</keyword>
<proteinExistence type="inferred from homology"/>
<sequence length="396" mass="44991">MYIKVLSVTDINNYIKNTMDNDFILNNASIRGEISNFKIHSSGHVYFSMKDQWSKINCVMFRSAAKGLKFLPEDGMKIIANGRISAYVKDGSYQLYCDKLELEGLGELYIAFEKLKNKLEKEGLFKEECKKSLPQYAKKIGVITSETGAAIRDIINVATRRNKNCEILIYPSLVQGTNASSDIIKGIKELNKVKDLDVIILARGGGSIEELWVFNDEELAREIFKSKVPIITGVGHETDFTIADFVSDKRAPTPSAAAEIAIKDLQELNSRLENYKNALNYYVLNNLKEKYNKLDRLKLSMEGNSPERIIINEYNKIDFIINKLNSYIKIEVDKRKEELSRMSILLSSNNPLNILNKGYSVIQDGTGKVINTIKELDKEKKVTINLKDGKKEYQIQ</sequence>
<comment type="function">
    <text evidence="1">Bidirectionally degrades single-stranded DNA into large acid-insoluble oligonucleotides, which are then degraded further into small acid-soluble oligonucleotides.</text>
</comment>
<comment type="catalytic activity">
    <reaction evidence="1">
        <text>Exonucleolytic cleavage in either 5'- to 3'- or 3'- to 5'-direction to yield nucleoside 5'-phosphates.</text>
        <dbReference type="EC" id="3.1.11.6"/>
    </reaction>
</comment>
<comment type="subunit">
    <text evidence="1">Heterooligomer composed of large and small subunits.</text>
</comment>
<comment type="subcellular location">
    <subcellularLocation>
        <location evidence="1">Cytoplasm</location>
    </subcellularLocation>
</comment>
<comment type="similarity">
    <text evidence="1">Belongs to the XseA family.</text>
</comment>
<name>EX7L_CLOTE</name>
<gene>
    <name evidence="1" type="primary">xseA</name>
    <name type="ordered locus">CTC_01578</name>
</gene>
<protein>
    <recommendedName>
        <fullName evidence="1">Exodeoxyribonuclease 7 large subunit</fullName>
        <ecNumber evidence="1">3.1.11.6</ecNumber>
    </recommendedName>
    <alternativeName>
        <fullName evidence="1">Exodeoxyribonuclease VII large subunit</fullName>
        <shortName evidence="1">Exonuclease VII large subunit</shortName>
    </alternativeName>
</protein>
<dbReference type="EC" id="3.1.11.6" evidence="1"/>
<dbReference type="EMBL" id="AE015927">
    <property type="protein sequence ID" value="AAO36125.1"/>
    <property type="molecule type" value="Genomic_DNA"/>
</dbReference>
<dbReference type="RefSeq" id="WP_011099785.1">
    <property type="nucleotide sequence ID" value="NC_004557.1"/>
</dbReference>
<dbReference type="SMR" id="Q894G7"/>
<dbReference type="STRING" id="212717.CTC_01578"/>
<dbReference type="GeneID" id="24254562"/>
<dbReference type="KEGG" id="ctc:CTC_01578"/>
<dbReference type="HOGENOM" id="CLU_023625_2_0_9"/>
<dbReference type="OrthoDB" id="9802795at2"/>
<dbReference type="Proteomes" id="UP000001412">
    <property type="component" value="Chromosome"/>
</dbReference>
<dbReference type="GO" id="GO:0005737">
    <property type="term" value="C:cytoplasm"/>
    <property type="evidence" value="ECO:0007669"/>
    <property type="project" value="UniProtKB-SubCell"/>
</dbReference>
<dbReference type="GO" id="GO:0009318">
    <property type="term" value="C:exodeoxyribonuclease VII complex"/>
    <property type="evidence" value="ECO:0007669"/>
    <property type="project" value="InterPro"/>
</dbReference>
<dbReference type="GO" id="GO:0008855">
    <property type="term" value="F:exodeoxyribonuclease VII activity"/>
    <property type="evidence" value="ECO:0007669"/>
    <property type="project" value="UniProtKB-UniRule"/>
</dbReference>
<dbReference type="GO" id="GO:0003676">
    <property type="term" value="F:nucleic acid binding"/>
    <property type="evidence" value="ECO:0007669"/>
    <property type="project" value="InterPro"/>
</dbReference>
<dbReference type="GO" id="GO:0006308">
    <property type="term" value="P:DNA catabolic process"/>
    <property type="evidence" value="ECO:0007669"/>
    <property type="project" value="UniProtKB-UniRule"/>
</dbReference>
<dbReference type="CDD" id="cd04489">
    <property type="entry name" value="ExoVII_LU_OBF"/>
    <property type="match status" value="1"/>
</dbReference>
<dbReference type="HAMAP" id="MF_00378">
    <property type="entry name" value="Exonuc_7_L"/>
    <property type="match status" value="1"/>
</dbReference>
<dbReference type="InterPro" id="IPR003753">
    <property type="entry name" value="Exonuc_VII_L"/>
</dbReference>
<dbReference type="InterPro" id="IPR020579">
    <property type="entry name" value="Exonuc_VII_lsu_C"/>
</dbReference>
<dbReference type="InterPro" id="IPR025824">
    <property type="entry name" value="OB-fold_nuc-bd_dom"/>
</dbReference>
<dbReference type="NCBIfam" id="TIGR00237">
    <property type="entry name" value="xseA"/>
    <property type="match status" value="1"/>
</dbReference>
<dbReference type="PANTHER" id="PTHR30008">
    <property type="entry name" value="EXODEOXYRIBONUCLEASE 7 LARGE SUBUNIT"/>
    <property type="match status" value="1"/>
</dbReference>
<dbReference type="PANTHER" id="PTHR30008:SF0">
    <property type="entry name" value="EXODEOXYRIBONUCLEASE 7 LARGE SUBUNIT"/>
    <property type="match status" value="1"/>
</dbReference>
<dbReference type="Pfam" id="PF02601">
    <property type="entry name" value="Exonuc_VII_L"/>
    <property type="match status" value="2"/>
</dbReference>
<dbReference type="Pfam" id="PF13742">
    <property type="entry name" value="tRNA_anti_2"/>
    <property type="match status" value="1"/>
</dbReference>
<reference key="1">
    <citation type="journal article" date="2003" name="Proc. Natl. Acad. Sci. U.S.A.">
        <title>The genome sequence of Clostridium tetani, the causative agent of tetanus disease.</title>
        <authorList>
            <person name="Brueggemann H."/>
            <person name="Baeumer S."/>
            <person name="Fricke W.F."/>
            <person name="Wiezer A."/>
            <person name="Liesegang H."/>
            <person name="Decker I."/>
            <person name="Herzberg C."/>
            <person name="Martinez-Arias R."/>
            <person name="Merkl R."/>
            <person name="Henne A."/>
            <person name="Gottschalk G."/>
        </authorList>
    </citation>
    <scope>NUCLEOTIDE SEQUENCE [LARGE SCALE GENOMIC DNA]</scope>
    <source>
        <strain>Massachusetts / E88</strain>
    </source>
</reference>